<gene>
    <name evidence="1" type="primary">rlmN</name>
    <name type="ordered locus">AZC_0752</name>
</gene>
<feature type="chain" id="PRO_0000350024" description="Dual-specificity RNA methyltransferase RlmN">
    <location>
        <begin position="1"/>
        <end position="406"/>
    </location>
</feature>
<feature type="domain" description="Radical SAM core" evidence="2">
    <location>
        <begin position="127"/>
        <end position="377"/>
    </location>
</feature>
<feature type="active site" description="Proton acceptor" evidence="1">
    <location>
        <position position="121"/>
    </location>
</feature>
<feature type="active site" description="S-methylcysteine intermediate" evidence="1">
    <location>
        <position position="380"/>
    </location>
</feature>
<feature type="binding site" evidence="1">
    <location>
        <position position="141"/>
    </location>
    <ligand>
        <name>[4Fe-4S] cluster</name>
        <dbReference type="ChEBI" id="CHEBI:49883"/>
        <note>4Fe-4S-S-AdoMet</note>
    </ligand>
</feature>
<feature type="binding site" evidence="1">
    <location>
        <position position="145"/>
    </location>
    <ligand>
        <name>[4Fe-4S] cluster</name>
        <dbReference type="ChEBI" id="CHEBI:49883"/>
        <note>4Fe-4S-S-AdoMet</note>
    </ligand>
</feature>
<feature type="binding site" evidence="1">
    <location>
        <position position="148"/>
    </location>
    <ligand>
        <name>[4Fe-4S] cluster</name>
        <dbReference type="ChEBI" id="CHEBI:49883"/>
        <note>4Fe-4S-S-AdoMet</note>
    </ligand>
</feature>
<feature type="binding site" evidence="1">
    <location>
        <begin position="206"/>
        <end position="207"/>
    </location>
    <ligand>
        <name>S-adenosyl-L-methionine</name>
        <dbReference type="ChEBI" id="CHEBI:59789"/>
    </ligand>
</feature>
<feature type="binding site" evidence="1">
    <location>
        <position position="238"/>
    </location>
    <ligand>
        <name>S-adenosyl-L-methionine</name>
        <dbReference type="ChEBI" id="CHEBI:59789"/>
    </ligand>
</feature>
<feature type="binding site" evidence="1">
    <location>
        <begin position="260"/>
        <end position="262"/>
    </location>
    <ligand>
        <name>S-adenosyl-L-methionine</name>
        <dbReference type="ChEBI" id="CHEBI:59789"/>
    </ligand>
</feature>
<feature type="binding site" evidence="1">
    <location>
        <position position="337"/>
    </location>
    <ligand>
        <name>S-adenosyl-L-methionine</name>
        <dbReference type="ChEBI" id="CHEBI:59789"/>
    </ligand>
</feature>
<feature type="disulfide bond" description="(transient)" evidence="1">
    <location>
        <begin position="134"/>
        <end position="380"/>
    </location>
</feature>
<name>RLMN_AZOC5</name>
<sequence>MYAPMMPSPTAVAAPVAALSILPSLAGLDREKLGLALAAIGVPERERKMRVNQLWHWIYLRGATDFAEMTNVSKTLRTQLAEHYSLARPEIVVEQVSQDGTRKWLLRLPAETPGERPHEVEAVYIPERDRGTLCVSSQVGCTLNCAFCHTGTQRLVRNLTAAEIVAQVLVARDRLGDYPGRERAVGPGLPTEGDRLVTNIVFMGMGEPLYAYDSVAEAIEILADGDGLGLGKRRITVSTSGVVPEIEKLGREVGPMLAISLHAVRDDLRDVLVPINKKYPIAELMEACRTYPAASNAKRITFEYVMLKGVNDSPADARALVKLLEGVPAKINLIPFNPWPGTKYECSDWETIEKFSDIVFRAGYASPVRTPRGRDILAACGQLKSETEKLSARERLALRAMAAAAE</sequence>
<organism>
    <name type="scientific">Azorhizobium caulinodans (strain ATCC 43989 / DSM 5975 / JCM 20966 / LMG 6465 / NBRC 14845 / NCIMB 13405 / ORS 571)</name>
    <dbReference type="NCBI Taxonomy" id="438753"/>
    <lineage>
        <taxon>Bacteria</taxon>
        <taxon>Pseudomonadati</taxon>
        <taxon>Pseudomonadota</taxon>
        <taxon>Alphaproteobacteria</taxon>
        <taxon>Hyphomicrobiales</taxon>
        <taxon>Xanthobacteraceae</taxon>
        <taxon>Azorhizobium</taxon>
    </lineage>
</organism>
<accession>A8IQ73</accession>
<comment type="function">
    <text evidence="1">Specifically methylates position 2 of adenine 2503 in 23S rRNA and position 2 of adenine 37 in tRNAs. m2A2503 modification seems to play a crucial role in the proofreading step occurring at the peptidyl transferase center and thus would serve to optimize ribosomal fidelity.</text>
</comment>
<comment type="catalytic activity">
    <reaction evidence="1">
        <text>adenosine(2503) in 23S rRNA + 2 reduced [2Fe-2S]-[ferredoxin] + 2 S-adenosyl-L-methionine = 2-methyladenosine(2503) in 23S rRNA + 5'-deoxyadenosine + L-methionine + 2 oxidized [2Fe-2S]-[ferredoxin] + S-adenosyl-L-homocysteine</text>
        <dbReference type="Rhea" id="RHEA:42916"/>
        <dbReference type="Rhea" id="RHEA-COMP:10000"/>
        <dbReference type="Rhea" id="RHEA-COMP:10001"/>
        <dbReference type="Rhea" id="RHEA-COMP:10152"/>
        <dbReference type="Rhea" id="RHEA-COMP:10282"/>
        <dbReference type="ChEBI" id="CHEBI:17319"/>
        <dbReference type="ChEBI" id="CHEBI:33737"/>
        <dbReference type="ChEBI" id="CHEBI:33738"/>
        <dbReference type="ChEBI" id="CHEBI:57844"/>
        <dbReference type="ChEBI" id="CHEBI:57856"/>
        <dbReference type="ChEBI" id="CHEBI:59789"/>
        <dbReference type="ChEBI" id="CHEBI:74411"/>
        <dbReference type="ChEBI" id="CHEBI:74497"/>
        <dbReference type="EC" id="2.1.1.192"/>
    </reaction>
</comment>
<comment type="catalytic activity">
    <reaction evidence="1">
        <text>adenosine(37) in tRNA + 2 reduced [2Fe-2S]-[ferredoxin] + 2 S-adenosyl-L-methionine = 2-methyladenosine(37) in tRNA + 5'-deoxyadenosine + L-methionine + 2 oxidized [2Fe-2S]-[ferredoxin] + S-adenosyl-L-homocysteine</text>
        <dbReference type="Rhea" id="RHEA:43332"/>
        <dbReference type="Rhea" id="RHEA-COMP:10000"/>
        <dbReference type="Rhea" id="RHEA-COMP:10001"/>
        <dbReference type="Rhea" id="RHEA-COMP:10162"/>
        <dbReference type="Rhea" id="RHEA-COMP:10485"/>
        <dbReference type="ChEBI" id="CHEBI:17319"/>
        <dbReference type="ChEBI" id="CHEBI:33737"/>
        <dbReference type="ChEBI" id="CHEBI:33738"/>
        <dbReference type="ChEBI" id="CHEBI:57844"/>
        <dbReference type="ChEBI" id="CHEBI:57856"/>
        <dbReference type="ChEBI" id="CHEBI:59789"/>
        <dbReference type="ChEBI" id="CHEBI:74411"/>
        <dbReference type="ChEBI" id="CHEBI:74497"/>
        <dbReference type="EC" id="2.1.1.192"/>
    </reaction>
</comment>
<comment type="cofactor">
    <cofactor evidence="1">
        <name>[4Fe-4S] cluster</name>
        <dbReference type="ChEBI" id="CHEBI:49883"/>
    </cofactor>
    <text evidence="1">Binds 1 [4Fe-4S] cluster. The cluster is coordinated with 3 cysteines and an exchangeable S-adenosyl-L-methionine.</text>
</comment>
<comment type="subcellular location">
    <subcellularLocation>
        <location evidence="1">Cytoplasm</location>
    </subcellularLocation>
</comment>
<comment type="miscellaneous">
    <text evidence="1">Reaction proceeds by a ping-pong mechanism involving intermediate methylation of a conserved cysteine residue.</text>
</comment>
<comment type="similarity">
    <text evidence="1">Belongs to the radical SAM superfamily. RlmN family.</text>
</comment>
<dbReference type="EC" id="2.1.1.192" evidence="1"/>
<dbReference type="EMBL" id="AP009384">
    <property type="protein sequence ID" value="BAF86750.1"/>
    <property type="molecule type" value="Genomic_DNA"/>
</dbReference>
<dbReference type="SMR" id="A8IQ73"/>
<dbReference type="STRING" id="438753.AZC_0752"/>
<dbReference type="KEGG" id="azc:AZC_0752"/>
<dbReference type="eggNOG" id="COG0820">
    <property type="taxonomic scope" value="Bacteria"/>
</dbReference>
<dbReference type="HOGENOM" id="CLU_029101_0_0_5"/>
<dbReference type="Proteomes" id="UP000000270">
    <property type="component" value="Chromosome"/>
</dbReference>
<dbReference type="GO" id="GO:0005737">
    <property type="term" value="C:cytoplasm"/>
    <property type="evidence" value="ECO:0007669"/>
    <property type="project" value="UniProtKB-SubCell"/>
</dbReference>
<dbReference type="GO" id="GO:0051539">
    <property type="term" value="F:4 iron, 4 sulfur cluster binding"/>
    <property type="evidence" value="ECO:0007669"/>
    <property type="project" value="UniProtKB-UniRule"/>
</dbReference>
<dbReference type="GO" id="GO:0009055">
    <property type="term" value="F:electron transfer activity"/>
    <property type="evidence" value="ECO:0007669"/>
    <property type="project" value="InterPro"/>
</dbReference>
<dbReference type="GO" id="GO:0020037">
    <property type="term" value="F:heme binding"/>
    <property type="evidence" value="ECO:0007669"/>
    <property type="project" value="InterPro"/>
</dbReference>
<dbReference type="GO" id="GO:0046872">
    <property type="term" value="F:metal ion binding"/>
    <property type="evidence" value="ECO:0007669"/>
    <property type="project" value="UniProtKB-KW"/>
</dbReference>
<dbReference type="GO" id="GO:0070040">
    <property type="term" value="F:rRNA (adenine(2503)-C2-)-methyltransferase activity"/>
    <property type="evidence" value="ECO:0007669"/>
    <property type="project" value="UniProtKB-UniRule"/>
</dbReference>
<dbReference type="GO" id="GO:0019843">
    <property type="term" value="F:rRNA binding"/>
    <property type="evidence" value="ECO:0007669"/>
    <property type="project" value="UniProtKB-UniRule"/>
</dbReference>
<dbReference type="GO" id="GO:0002935">
    <property type="term" value="F:tRNA (adenine(37)-C2)-methyltransferase activity"/>
    <property type="evidence" value="ECO:0007669"/>
    <property type="project" value="UniProtKB-UniRule"/>
</dbReference>
<dbReference type="GO" id="GO:0000049">
    <property type="term" value="F:tRNA binding"/>
    <property type="evidence" value="ECO:0007669"/>
    <property type="project" value="UniProtKB-UniRule"/>
</dbReference>
<dbReference type="GO" id="GO:0070475">
    <property type="term" value="P:rRNA base methylation"/>
    <property type="evidence" value="ECO:0007669"/>
    <property type="project" value="UniProtKB-UniRule"/>
</dbReference>
<dbReference type="GO" id="GO:0030488">
    <property type="term" value="P:tRNA methylation"/>
    <property type="evidence" value="ECO:0007669"/>
    <property type="project" value="UniProtKB-UniRule"/>
</dbReference>
<dbReference type="CDD" id="cd01335">
    <property type="entry name" value="Radical_SAM"/>
    <property type="match status" value="1"/>
</dbReference>
<dbReference type="FunFam" id="3.20.20.70:FF:000008">
    <property type="entry name" value="Dual-specificity RNA methyltransferase RlmN"/>
    <property type="match status" value="1"/>
</dbReference>
<dbReference type="Gene3D" id="1.10.150.530">
    <property type="match status" value="1"/>
</dbReference>
<dbReference type="Gene3D" id="3.20.20.70">
    <property type="entry name" value="Aldolase class I"/>
    <property type="match status" value="1"/>
</dbReference>
<dbReference type="HAMAP" id="MF_01849">
    <property type="entry name" value="RNA_methyltr_RlmN"/>
    <property type="match status" value="1"/>
</dbReference>
<dbReference type="InterPro" id="IPR013785">
    <property type="entry name" value="Aldolase_TIM"/>
</dbReference>
<dbReference type="InterPro" id="IPR009056">
    <property type="entry name" value="Cyt_c-like_dom"/>
</dbReference>
<dbReference type="InterPro" id="IPR040072">
    <property type="entry name" value="Methyltransferase_A"/>
</dbReference>
<dbReference type="InterPro" id="IPR048641">
    <property type="entry name" value="RlmN_N"/>
</dbReference>
<dbReference type="InterPro" id="IPR027492">
    <property type="entry name" value="RNA_MTrfase_RlmN"/>
</dbReference>
<dbReference type="InterPro" id="IPR004383">
    <property type="entry name" value="rRNA_lsu_MTrfase_RlmN/Cfr"/>
</dbReference>
<dbReference type="InterPro" id="IPR007197">
    <property type="entry name" value="rSAM"/>
</dbReference>
<dbReference type="NCBIfam" id="TIGR00048">
    <property type="entry name" value="rRNA_mod_RlmN"/>
    <property type="match status" value="1"/>
</dbReference>
<dbReference type="PANTHER" id="PTHR30544">
    <property type="entry name" value="23S RRNA METHYLTRANSFERASE"/>
    <property type="match status" value="1"/>
</dbReference>
<dbReference type="PANTHER" id="PTHR30544:SF5">
    <property type="entry name" value="RADICAL SAM CORE DOMAIN-CONTAINING PROTEIN"/>
    <property type="match status" value="1"/>
</dbReference>
<dbReference type="Pfam" id="PF04055">
    <property type="entry name" value="Radical_SAM"/>
    <property type="match status" value="1"/>
</dbReference>
<dbReference type="Pfam" id="PF21016">
    <property type="entry name" value="RlmN_N"/>
    <property type="match status" value="1"/>
</dbReference>
<dbReference type="PIRSF" id="PIRSF006004">
    <property type="entry name" value="CHP00048"/>
    <property type="match status" value="1"/>
</dbReference>
<dbReference type="SFLD" id="SFLDF00275">
    <property type="entry name" value="adenosine_C2_methyltransferase"/>
    <property type="match status" value="1"/>
</dbReference>
<dbReference type="SFLD" id="SFLDG01062">
    <property type="entry name" value="methyltransferase_(Class_A)"/>
    <property type="match status" value="1"/>
</dbReference>
<dbReference type="SUPFAM" id="SSF102114">
    <property type="entry name" value="Radical SAM enzymes"/>
    <property type="match status" value="1"/>
</dbReference>
<dbReference type="PROSITE" id="PS51918">
    <property type="entry name" value="RADICAL_SAM"/>
    <property type="match status" value="1"/>
</dbReference>
<keyword id="KW-0004">4Fe-4S</keyword>
<keyword id="KW-0963">Cytoplasm</keyword>
<keyword id="KW-1015">Disulfide bond</keyword>
<keyword id="KW-0408">Iron</keyword>
<keyword id="KW-0411">Iron-sulfur</keyword>
<keyword id="KW-0479">Metal-binding</keyword>
<keyword id="KW-0489">Methyltransferase</keyword>
<keyword id="KW-1185">Reference proteome</keyword>
<keyword id="KW-0698">rRNA processing</keyword>
<keyword id="KW-0949">S-adenosyl-L-methionine</keyword>
<keyword id="KW-0808">Transferase</keyword>
<keyword id="KW-0819">tRNA processing</keyword>
<proteinExistence type="inferred from homology"/>
<evidence type="ECO:0000255" key="1">
    <source>
        <dbReference type="HAMAP-Rule" id="MF_01849"/>
    </source>
</evidence>
<evidence type="ECO:0000255" key="2">
    <source>
        <dbReference type="PROSITE-ProRule" id="PRU01266"/>
    </source>
</evidence>
<protein>
    <recommendedName>
        <fullName evidence="1">Dual-specificity RNA methyltransferase RlmN</fullName>
        <ecNumber evidence="1">2.1.1.192</ecNumber>
    </recommendedName>
    <alternativeName>
        <fullName evidence="1">23S rRNA (adenine(2503)-C(2))-methyltransferase</fullName>
    </alternativeName>
    <alternativeName>
        <fullName evidence="1">23S rRNA m2A2503 methyltransferase</fullName>
    </alternativeName>
    <alternativeName>
        <fullName evidence="1">Ribosomal RNA large subunit methyltransferase N</fullName>
    </alternativeName>
    <alternativeName>
        <fullName evidence="1">tRNA (adenine(37)-C(2))-methyltransferase</fullName>
    </alternativeName>
    <alternativeName>
        <fullName evidence="1">tRNA m2A37 methyltransferase</fullName>
    </alternativeName>
</protein>
<reference key="1">
    <citation type="submission" date="2007-04" db="EMBL/GenBank/DDBJ databases">
        <title>Complete genome sequence of the nitrogen-fixing bacterium Azorhizobium caulinodans ORS571.</title>
        <authorList>
            <person name="Lee K.B."/>
            <person name="Backer P.D."/>
            <person name="Aono T."/>
            <person name="Liu C.T."/>
            <person name="Suzuki S."/>
            <person name="Suzuki T."/>
            <person name="Kaneko T."/>
            <person name="Yamada M."/>
            <person name="Tabata S."/>
            <person name="Kupfer D.M."/>
            <person name="Najar F.Z."/>
            <person name="Wiley G.B."/>
            <person name="Roe B."/>
            <person name="Binnewies T."/>
            <person name="Ussery D."/>
            <person name="Vereecke D."/>
            <person name="Gevers D."/>
            <person name="Holsters M."/>
            <person name="Oyaizu H."/>
        </authorList>
    </citation>
    <scope>NUCLEOTIDE SEQUENCE [LARGE SCALE GENOMIC DNA]</scope>
    <source>
        <strain>ATCC 43989 / DSM 5975 / JCM 20966 / LMG 6465 / NBRC 14845 / NCIMB 13405 / ORS 571</strain>
    </source>
</reference>